<proteinExistence type="inferred from homology"/>
<accession>P0A304</accession>
<accession>P50014</accession>
<comment type="function">
    <text evidence="1">F(1)F(0) ATP synthase produces ATP from ADP in the presence of a proton or sodium gradient. F-type ATPases consist of two structural domains, F(1) containing the extramembraneous catalytic core and F(0) containing the membrane proton channel, linked together by a central stalk and a peripheral stalk. During catalysis, ATP synthesis in the catalytic domain of F(1) is coupled via a rotary mechanism of the central stalk subunits to proton translocation.</text>
</comment>
<comment type="function">
    <text evidence="1">Key component of the F(0) channel; it plays a direct role in translocation across the membrane. A homomeric c-ring of between 10-14 subunits forms the central stalk rotor element with the F(1) delta and epsilon subunits.</text>
</comment>
<comment type="subunit">
    <text evidence="1">F-type ATPases have 2 components, F(1) - the catalytic core - and F(0) - the membrane proton channel. F(1) has five subunits: alpha(3), beta(3), gamma(1), delta(1), epsilon(1). F(0) has three main subunits: a(1), b(2) and c(10-14). The alpha and beta chains form an alternating ring which encloses part of the gamma chain. F(1) is attached to F(0) by a central stalk formed by the gamma and epsilon chains, while a peripheral stalk is formed by the delta and b chains.</text>
</comment>
<comment type="subcellular location">
    <subcellularLocation>
        <location evidence="1">Cell membrane</location>
        <topology evidence="1">Multi-pass membrane protein</topology>
    </subcellularLocation>
</comment>
<comment type="similarity">
    <text evidence="1">Belongs to the ATPase C chain family.</text>
</comment>
<reference key="1">
    <citation type="journal article" date="2002" name="Nature">
        <title>Complete genome sequence of the model actinomycete Streptomyces coelicolor A3(2).</title>
        <authorList>
            <person name="Bentley S.D."/>
            <person name="Chater K.F."/>
            <person name="Cerdeno-Tarraga A.-M."/>
            <person name="Challis G.L."/>
            <person name="Thomson N.R."/>
            <person name="James K.D."/>
            <person name="Harris D.E."/>
            <person name="Quail M.A."/>
            <person name="Kieser H."/>
            <person name="Harper D."/>
            <person name="Bateman A."/>
            <person name="Brown S."/>
            <person name="Chandra G."/>
            <person name="Chen C.W."/>
            <person name="Collins M."/>
            <person name="Cronin A."/>
            <person name="Fraser A."/>
            <person name="Goble A."/>
            <person name="Hidalgo J."/>
            <person name="Hornsby T."/>
            <person name="Howarth S."/>
            <person name="Huang C.-H."/>
            <person name="Kieser T."/>
            <person name="Larke L."/>
            <person name="Murphy L.D."/>
            <person name="Oliver K."/>
            <person name="O'Neil S."/>
            <person name="Rabbinowitsch E."/>
            <person name="Rajandream M.A."/>
            <person name="Rutherford K.M."/>
            <person name="Rutter S."/>
            <person name="Seeger K."/>
            <person name="Saunders D."/>
            <person name="Sharp S."/>
            <person name="Squares R."/>
            <person name="Squares S."/>
            <person name="Taylor K."/>
            <person name="Warren T."/>
            <person name="Wietzorrek A."/>
            <person name="Woodward J.R."/>
            <person name="Barrell B.G."/>
            <person name="Parkhill J."/>
            <person name="Hopwood D.A."/>
        </authorList>
    </citation>
    <scope>NUCLEOTIDE SEQUENCE [LARGE SCALE GENOMIC DNA]</scope>
    <source>
        <strain>ATCC BAA-471 / A3(2) / M145</strain>
    </source>
</reference>
<keyword id="KW-0066">ATP synthesis</keyword>
<keyword id="KW-1003">Cell membrane</keyword>
<keyword id="KW-0138">CF(0)</keyword>
<keyword id="KW-0375">Hydrogen ion transport</keyword>
<keyword id="KW-0406">Ion transport</keyword>
<keyword id="KW-0446">Lipid-binding</keyword>
<keyword id="KW-0472">Membrane</keyword>
<keyword id="KW-1185">Reference proteome</keyword>
<keyword id="KW-0812">Transmembrane</keyword>
<keyword id="KW-1133">Transmembrane helix</keyword>
<keyword id="KW-0813">Transport</keyword>
<evidence type="ECO:0000255" key="1">
    <source>
        <dbReference type="HAMAP-Rule" id="MF_01396"/>
    </source>
</evidence>
<protein>
    <recommendedName>
        <fullName evidence="1">ATP synthase subunit c</fullName>
    </recommendedName>
    <alternativeName>
        <fullName evidence="1">ATP synthase F(0) sector subunit c</fullName>
    </alternativeName>
    <alternativeName>
        <fullName evidence="1">F-type ATPase subunit c</fullName>
        <shortName evidence="1">F-ATPase subunit c</shortName>
    </alternativeName>
    <alternativeName>
        <fullName evidence="1">Lipid-binding protein</fullName>
    </alternativeName>
</protein>
<sequence>MSQTLAAVEGSLGSIGYGLAAIGPGVGVGIIFGNGTQAMARQPEAAGLIRANQILGFAFCEALALIGLVMPFVYGY</sequence>
<name>ATPL_STRCO</name>
<feature type="chain" id="PRO_0000112165" description="ATP synthase subunit c">
    <location>
        <begin position="1"/>
        <end position="76"/>
    </location>
</feature>
<feature type="transmembrane region" description="Helical" evidence="1">
    <location>
        <begin position="12"/>
        <end position="32"/>
    </location>
</feature>
<feature type="transmembrane region" description="Helical" evidence="1">
    <location>
        <begin position="54"/>
        <end position="74"/>
    </location>
</feature>
<feature type="site" description="Reversibly protonated during proton transport" evidence="1">
    <location>
        <position position="61"/>
    </location>
</feature>
<dbReference type="EMBL" id="AL939123">
    <property type="protein sequence ID" value="CAB94539.1"/>
    <property type="molecule type" value="Genomic_DNA"/>
</dbReference>
<dbReference type="RefSeq" id="NP_629507.1">
    <property type="nucleotide sequence ID" value="NC_003888.3"/>
</dbReference>
<dbReference type="RefSeq" id="WP_003973629.1">
    <property type="nucleotide sequence ID" value="NZ_VNID01000011.1"/>
</dbReference>
<dbReference type="SMR" id="P0A304"/>
<dbReference type="STRING" id="100226.gene:17763020"/>
<dbReference type="PaxDb" id="100226-SCO5368"/>
<dbReference type="GeneID" id="96655348"/>
<dbReference type="KEGG" id="sco:SCO5368"/>
<dbReference type="PATRIC" id="fig|100226.15.peg.5448"/>
<dbReference type="eggNOG" id="COG0636">
    <property type="taxonomic scope" value="Bacteria"/>
</dbReference>
<dbReference type="HOGENOM" id="CLU_148047_5_2_11"/>
<dbReference type="InParanoid" id="P0A304"/>
<dbReference type="OrthoDB" id="3183855at2"/>
<dbReference type="PhylomeDB" id="P0A304"/>
<dbReference type="Proteomes" id="UP000001973">
    <property type="component" value="Chromosome"/>
</dbReference>
<dbReference type="GO" id="GO:0005886">
    <property type="term" value="C:plasma membrane"/>
    <property type="evidence" value="ECO:0007669"/>
    <property type="project" value="UniProtKB-SubCell"/>
</dbReference>
<dbReference type="GO" id="GO:0045259">
    <property type="term" value="C:proton-transporting ATP synthase complex"/>
    <property type="evidence" value="ECO:0007669"/>
    <property type="project" value="UniProtKB-KW"/>
</dbReference>
<dbReference type="GO" id="GO:0033177">
    <property type="term" value="C:proton-transporting two-sector ATPase complex, proton-transporting domain"/>
    <property type="evidence" value="ECO:0007669"/>
    <property type="project" value="InterPro"/>
</dbReference>
<dbReference type="GO" id="GO:0008289">
    <property type="term" value="F:lipid binding"/>
    <property type="evidence" value="ECO:0007669"/>
    <property type="project" value="UniProtKB-KW"/>
</dbReference>
<dbReference type="GO" id="GO:0046933">
    <property type="term" value="F:proton-transporting ATP synthase activity, rotational mechanism"/>
    <property type="evidence" value="ECO:0007669"/>
    <property type="project" value="UniProtKB-UniRule"/>
</dbReference>
<dbReference type="GO" id="GO:0015986">
    <property type="term" value="P:proton motive force-driven ATP synthesis"/>
    <property type="evidence" value="ECO:0000318"/>
    <property type="project" value="GO_Central"/>
</dbReference>
<dbReference type="CDD" id="cd18121">
    <property type="entry name" value="ATP-synt_Fo_c"/>
    <property type="match status" value="1"/>
</dbReference>
<dbReference type="FunFam" id="1.20.20.10:FF:000015">
    <property type="entry name" value="ATP synthase subunit c"/>
    <property type="match status" value="1"/>
</dbReference>
<dbReference type="Gene3D" id="1.20.20.10">
    <property type="entry name" value="F1F0 ATP synthase subunit C"/>
    <property type="match status" value="1"/>
</dbReference>
<dbReference type="HAMAP" id="MF_01396">
    <property type="entry name" value="ATP_synth_c_bact"/>
    <property type="match status" value="1"/>
</dbReference>
<dbReference type="InterPro" id="IPR005953">
    <property type="entry name" value="ATP_synth_csu_bac/chlpt"/>
</dbReference>
<dbReference type="InterPro" id="IPR000454">
    <property type="entry name" value="ATP_synth_F0_csu"/>
</dbReference>
<dbReference type="InterPro" id="IPR020537">
    <property type="entry name" value="ATP_synth_F0_csu_DDCD_BS"/>
</dbReference>
<dbReference type="InterPro" id="IPR038662">
    <property type="entry name" value="ATP_synth_F0_csu_sf"/>
</dbReference>
<dbReference type="InterPro" id="IPR002379">
    <property type="entry name" value="ATPase_proteolipid_c-like_dom"/>
</dbReference>
<dbReference type="InterPro" id="IPR035921">
    <property type="entry name" value="F/V-ATP_Csub_sf"/>
</dbReference>
<dbReference type="NCBIfam" id="TIGR01260">
    <property type="entry name" value="ATP_synt_c"/>
    <property type="match status" value="1"/>
</dbReference>
<dbReference type="PANTHER" id="PTHR10031">
    <property type="entry name" value="ATP SYNTHASE LIPID-BINDING PROTEIN, MITOCHONDRIAL"/>
    <property type="match status" value="1"/>
</dbReference>
<dbReference type="PANTHER" id="PTHR10031:SF0">
    <property type="entry name" value="ATPASE PROTEIN 9"/>
    <property type="match status" value="1"/>
</dbReference>
<dbReference type="Pfam" id="PF00137">
    <property type="entry name" value="ATP-synt_C"/>
    <property type="match status" value="1"/>
</dbReference>
<dbReference type="PRINTS" id="PR00124">
    <property type="entry name" value="ATPASEC"/>
</dbReference>
<dbReference type="SUPFAM" id="SSF81333">
    <property type="entry name" value="F1F0 ATP synthase subunit C"/>
    <property type="match status" value="1"/>
</dbReference>
<dbReference type="PROSITE" id="PS00605">
    <property type="entry name" value="ATPASE_C"/>
    <property type="match status" value="1"/>
</dbReference>
<gene>
    <name evidence="1" type="primary">atpE</name>
    <name type="ordered locus">SCO5368</name>
    <name type="ORF">2SC6G5.12</name>
</gene>
<organism>
    <name type="scientific">Streptomyces coelicolor (strain ATCC BAA-471 / A3(2) / M145)</name>
    <dbReference type="NCBI Taxonomy" id="100226"/>
    <lineage>
        <taxon>Bacteria</taxon>
        <taxon>Bacillati</taxon>
        <taxon>Actinomycetota</taxon>
        <taxon>Actinomycetes</taxon>
        <taxon>Kitasatosporales</taxon>
        <taxon>Streptomycetaceae</taxon>
        <taxon>Streptomyces</taxon>
        <taxon>Streptomyces albidoflavus group</taxon>
    </lineage>
</organism>